<reference key="1">
    <citation type="journal article" date="2001" name="Mol. Phylogenet. Evol.">
        <title>Molecular systematics of bats of the genus Myotis (Vespertilionidae) suggests deterministic ecomorphological convergences.</title>
        <authorList>
            <person name="Ruedi M."/>
            <person name="Mayer F."/>
        </authorList>
    </citation>
    <scope>NUCLEOTIDE SEQUENCE [GENOMIC DNA]</scope>
    <source>
        <strain>Isolate MVZ AD472</strain>
    </source>
</reference>
<comment type="function">
    <text evidence="2">Component of the ubiquinol-cytochrome c reductase complex (complex III or cytochrome b-c1 complex) that is part of the mitochondrial respiratory chain. The b-c1 complex mediates electron transfer from ubiquinol to cytochrome c. Contributes to the generation of a proton gradient across the mitochondrial membrane that is then used for ATP synthesis.</text>
</comment>
<comment type="cofactor">
    <cofactor evidence="2">
        <name>heme b</name>
        <dbReference type="ChEBI" id="CHEBI:60344"/>
    </cofactor>
    <text evidence="2">Binds 2 heme b groups non-covalently.</text>
</comment>
<comment type="subunit">
    <text evidence="2">The cytochrome bc1 complex contains 11 subunits: 3 respiratory subunits (MT-CYB, CYC1 and UQCRFS1), 2 core proteins (UQCRC1 and UQCRC2) and 6 low-molecular weight proteins (UQCRH/QCR6, UQCRB/QCR7, UQCRQ/QCR8, UQCR10/QCR9, UQCR11/QCR10 and a cleavage product of UQCRFS1). This cytochrome bc1 complex then forms a dimer.</text>
</comment>
<comment type="subcellular location">
    <subcellularLocation>
        <location evidence="2">Mitochondrion inner membrane</location>
        <topology evidence="2">Multi-pass membrane protein</topology>
    </subcellularLocation>
</comment>
<comment type="miscellaneous">
    <text evidence="1">Heme 1 (or BL or b562) is low-potential and absorbs at about 562 nm, and heme 2 (or BH or b566) is high-potential and absorbs at about 566 nm.</text>
</comment>
<comment type="similarity">
    <text evidence="3 4">Belongs to the cytochrome b family.</text>
</comment>
<comment type="caution">
    <text evidence="2">The full-length protein contains only eight transmembrane helices, not nine as predicted by bioinformatics tools.</text>
</comment>
<evidence type="ECO:0000250" key="1"/>
<evidence type="ECO:0000250" key="2">
    <source>
        <dbReference type="UniProtKB" id="P00157"/>
    </source>
</evidence>
<evidence type="ECO:0000255" key="3">
    <source>
        <dbReference type="PROSITE-ProRule" id="PRU00967"/>
    </source>
</evidence>
<evidence type="ECO:0000255" key="4">
    <source>
        <dbReference type="PROSITE-ProRule" id="PRU00968"/>
    </source>
</evidence>
<dbReference type="EMBL" id="AF376867">
    <property type="protein sequence ID" value="AAK57686.1"/>
    <property type="molecule type" value="Genomic_DNA"/>
</dbReference>
<dbReference type="SMR" id="Q956Z5"/>
<dbReference type="GO" id="GO:0005743">
    <property type="term" value="C:mitochondrial inner membrane"/>
    <property type="evidence" value="ECO:0007669"/>
    <property type="project" value="UniProtKB-SubCell"/>
</dbReference>
<dbReference type="GO" id="GO:0045275">
    <property type="term" value="C:respiratory chain complex III"/>
    <property type="evidence" value="ECO:0007669"/>
    <property type="project" value="InterPro"/>
</dbReference>
<dbReference type="GO" id="GO:0046872">
    <property type="term" value="F:metal ion binding"/>
    <property type="evidence" value="ECO:0007669"/>
    <property type="project" value="UniProtKB-KW"/>
</dbReference>
<dbReference type="GO" id="GO:0008121">
    <property type="term" value="F:ubiquinol-cytochrome-c reductase activity"/>
    <property type="evidence" value="ECO:0007669"/>
    <property type="project" value="InterPro"/>
</dbReference>
<dbReference type="GO" id="GO:0006122">
    <property type="term" value="P:mitochondrial electron transport, ubiquinol to cytochrome c"/>
    <property type="evidence" value="ECO:0007669"/>
    <property type="project" value="TreeGrafter"/>
</dbReference>
<dbReference type="CDD" id="cd00290">
    <property type="entry name" value="cytochrome_b_C"/>
    <property type="match status" value="1"/>
</dbReference>
<dbReference type="CDD" id="cd00284">
    <property type="entry name" value="Cytochrome_b_N"/>
    <property type="match status" value="1"/>
</dbReference>
<dbReference type="FunFam" id="1.20.810.10:FF:000002">
    <property type="entry name" value="Cytochrome b"/>
    <property type="match status" value="1"/>
</dbReference>
<dbReference type="Gene3D" id="1.20.810.10">
    <property type="entry name" value="Cytochrome Bc1 Complex, Chain C"/>
    <property type="match status" value="1"/>
</dbReference>
<dbReference type="InterPro" id="IPR005798">
    <property type="entry name" value="Cyt_b/b6_C"/>
</dbReference>
<dbReference type="InterPro" id="IPR036150">
    <property type="entry name" value="Cyt_b/b6_C_sf"/>
</dbReference>
<dbReference type="InterPro" id="IPR005797">
    <property type="entry name" value="Cyt_b/b6_N"/>
</dbReference>
<dbReference type="InterPro" id="IPR027387">
    <property type="entry name" value="Cytb/b6-like_sf"/>
</dbReference>
<dbReference type="InterPro" id="IPR030689">
    <property type="entry name" value="Cytochrome_b"/>
</dbReference>
<dbReference type="InterPro" id="IPR048260">
    <property type="entry name" value="Cytochrome_b_C_euk/bac"/>
</dbReference>
<dbReference type="InterPro" id="IPR048259">
    <property type="entry name" value="Cytochrome_b_N_euk/bac"/>
</dbReference>
<dbReference type="InterPro" id="IPR016174">
    <property type="entry name" value="Di-haem_cyt_TM"/>
</dbReference>
<dbReference type="PANTHER" id="PTHR19271">
    <property type="entry name" value="CYTOCHROME B"/>
    <property type="match status" value="1"/>
</dbReference>
<dbReference type="PANTHER" id="PTHR19271:SF16">
    <property type="entry name" value="CYTOCHROME B"/>
    <property type="match status" value="1"/>
</dbReference>
<dbReference type="Pfam" id="PF00032">
    <property type="entry name" value="Cytochrom_B_C"/>
    <property type="match status" value="1"/>
</dbReference>
<dbReference type="Pfam" id="PF00033">
    <property type="entry name" value="Cytochrome_B"/>
    <property type="match status" value="1"/>
</dbReference>
<dbReference type="PIRSF" id="PIRSF038885">
    <property type="entry name" value="COB"/>
    <property type="match status" value="1"/>
</dbReference>
<dbReference type="SUPFAM" id="SSF81648">
    <property type="entry name" value="a domain/subunit of cytochrome bc1 complex (Ubiquinol-cytochrome c reductase)"/>
    <property type="match status" value="1"/>
</dbReference>
<dbReference type="SUPFAM" id="SSF81342">
    <property type="entry name" value="Transmembrane di-heme cytochromes"/>
    <property type="match status" value="1"/>
</dbReference>
<dbReference type="PROSITE" id="PS51003">
    <property type="entry name" value="CYTB_CTER"/>
    <property type="match status" value="1"/>
</dbReference>
<dbReference type="PROSITE" id="PS51002">
    <property type="entry name" value="CYTB_NTER"/>
    <property type="match status" value="1"/>
</dbReference>
<feature type="chain" id="PRO_0000061251" description="Cytochrome b">
    <location>
        <begin position="1"/>
        <end position="379"/>
    </location>
</feature>
<feature type="transmembrane region" description="Helical" evidence="2">
    <location>
        <begin position="33"/>
        <end position="53"/>
    </location>
</feature>
<feature type="transmembrane region" description="Helical" evidence="2">
    <location>
        <begin position="77"/>
        <end position="98"/>
    </location>
</feature>
<feature type="transmembrane region" description="Helical" evidence="2">
    <location>
        <begin position="113"/>
        <end position="133"/>
    </location>
</feature>
<feature type="transmembrane region" description="Helical" evidence="2">
    <location>
        <begin position="178"/>
        <end position="198"/>
    </location>
</feature>
<feature type="transmembrane region" description="Helical" evidence="2">
    <location>
        <begin position="226"/>
        <end position="246"/>
    </location>
</feature>
<feature type="transmembrane region" description="Helical" evidence="2">
    <location>
        <begin position="288"/>
        <end position="308"/>
    </location>
</feature>
<feature type="transmembrane region" description="Helical" evidence="2">
    <location>
        <begin position="320"/>
        <end position="340"/>
    </location>
</feature>
<feature type="transmembrane region" description="Helical" evidence="2">
    <location>
        <begin position="347"/>
        <end position="367"/>
    </location>
</feature>
<feature type="binding site" description="axial binding residue" evidence="2">
    <location>
        <position position="83"/>
    </location>
    <ligand>
        <name>heme b</name>
        <dbReference type="ChEBI" id="CHEBI:60344"/>
        <label>b562</label>
    </ligand>
    <ligandPart>
        <name>Fe</name>
        <dbReference type="ChEBI" id="CHEBI:18248"/>
    </ligandPart>
</feature>
<feature type="binding site" description="axial binding residue" evidence="2">
    <location>
        <position position="97"/>
    </location>
    <ligand>
        <name>heme b</name>
        <dbReference type="ChEBI" id="CHEBI:60344"/>
        <label>b566</label>
    </ligand>
    <ligandPart>
        <name>Fe</name>
        <dbReference type="ChEBI" id="CHEBI:18248"/>
    </ligandPart>
</feature>
<feature type="binding site" description="axial binding residue" evidence="2">
    <location>
        <position position="182"/>
    </location>
    <ligand>
        <name>heme b</name>
        <dbReference type="ChEBI" id="CHEBI:60344"/>
        <label>b562</label>
    </ligand>
    <ligandPart>
        <name>Fe</name>
        <dbReference type="ChEBI" id="CHEBI:18248"/>
    </ligandPart>
</feature>
<feature type="binding site" description="axial binding residue" evidence="2">
    <location>
        <position position="196"/>
    </location>
    <ligand>
        <name>heme b</name>
        <dbReference type="ChEBI" id="CHEBI:60344"/>
        <label>b566</label>
    </ligand>
    <ligandPart>
        <name>Fe</name>
        <dbReference type="ChEBI" id="CHEBI:18248"/>
    </ligandPart>
</feature>
<feature type="binding site" evidence="2">
    <location>
        <position position="201"/>
    </location>
    <ligand>
        <name>a ubiquinone</name>
        <dbReference type="ChEBI" id="CHEBI:16389"/>
    </ligand>
</feature>
<protein>
    <recommendedName>
        <fullName>Cytochrome b</fullName>
    </recommendedName>
    <alternativeName>
        <fullName>Complex III subunit 3</fullName>
    </alternativeName>
    <alternativeName>
        <fullName>Complex III subunit III</fullName>
    </alternativeName>
    <alternativeName>
        <fullName>Cytochrome b-c1 complex subunit 3</fullName>
    </alternativeName>
    <alternativeName>
        <fullName>Ubiquinol-cytochrome-c reductase complex cytochrome b subunit</fullName>
    </alternativeName>
</protein>
<gene>
    <name type="primary">MT-CYB</name>
    <name type="synonym">COB</name>
    <name type="synonym">CYTB</name>
    <name type="synonym">MTCYB</name>
</gene>
<proteinExistence type="inferred from homology"/>
<geneLocation type="mitochondrion"/>
<sequence length="379" mass="42760">MTNIRKSHPLMKIINSSFIDLPAPSNISSWWNFGSLLGICLALQILTGLFLAMHYTSDTATAFNSVTHICRDVNYGWVLRYLHANGASMFFICLYLHVGRGLYYGSYMYTETWNIGVILLFAVMATAFMGYVLPWGQMSFWGATVITNLLSAIPYIGTDLVQWIWGGFSVDKATLTRFFAFHFLLPFIIAAMVMVHLLFLHETGSNNPTGIPSNADMIPFHPYYTIKDILGLLLMIMVLLTLVLFSPDLLGDPDNYMPANPLNTPPHIKPEWYFLFAYAILRSIPNKLGGVLALVLSILILIIIPLLHTSKQRSMTFRPLSQCLFWLLAADLFTLTWIGGQPVEHPYVIIGQLASILYLSIIIILMPLTSLMENHLLKW</sequence>
<name>CYB_MYORU</name>
<accession>Q956Z5</accession>
<keyword id="KW-0249">Electron transport</keyword>
<keyword id="KW-0349">Heme</keyword>
<keyword id="KW-0408">Iron</keyword>
<keyword id="KW-0472">Membrane</keyword>
<keyword id="KW-0479">Metal-binding</keyword>
<keyword id="KW-0496">Mitochondrion</keyword>
<keyword id="KW-0999">Mitochondrion inner membrane</keyword>
<keyword id="KW-0679">Respiratory chain</keyword>
<keyword id="KW-0812">Transmembrane</keyword>
<keyword id="KW-1133">Transmembrane helix</keyword>
<keyword id="KW-0813">Transport</keyword>
<keyword id="KW-0830">Ubiquinone</keyword>
<organism>
    <name type="scientific">Myotis ruber</name>
    <name type="common">Red myotis</name>
    <dbReference type="NCBI Taxonomy" id="159333"/>
    <lineage>
        <taxon>Eukaryota</taxon>
        <taxon>Metazoa</taxon>
        <taxon>Chordata</taxon>
        <taxon>Craniata</taxon>
        <taxon>Vertebrata</taxon>
        <taxon>Euteleostomi</taxon>
        <taxon>Mammalia</taxon>
        <taxon>Eutheria</taxon>
        <taxon>Laurasiatheria</taxon>
        <taxon>Chiroptera</taxon>
        <taxon>Yangochiroptera</taxon>
        <taxon>Vespertilionidae</taxon>
        <taxon>Myotis</taxon>
    </lineage>
</organism>